<sequence length="459" mass="49632">MNRLPSSASALACSAHALNLIEKRTLDHEEMKALNREVIEYFKEHVNPGFLEYRKSVTAGGDYGAVEWQAGGLNTLVDTQGEEFIDCLGGFGIFNVGHRNPVVVSAVQNQLAKQPLHSQELLDPLRAMLAKTLAALTPGKLKYSFFCNSGTESVEAALKLAKAYQSPRGKFTFIATSGAFHGKSLGALSATAKSTFRKPFMPLLPGFRHVPFGNIEAMRTALNECKKTGDDVAAVILEPIQGEGGVILPPPGYLTAVRKLCDEFGALMILDEVQTGMGRTGKMFACEHENVQPDILCLAKALGGGVMPIGATIATEEVFSVLFDNPFLHTTTFGGNPLACAAALATINVLLEQNLPAQAEQKGDMLLDGFRQLAREYPDLVQEARGKGMLMAIEFVDNEIGYNFASEMFRQRVLVAGTLNNAKTIRIEPPLTLTIEQCELVIKAARKALAAMRVSVEEA</sequence>
<name>PAT_ECOLC</name>
<gene>
    <name evidence="1" type="primary">patA</name>
    <name type="ordered locus">EcolC_0627</name>
</gene>
<accession>B1IRP4</accession>
<organism>
    <name type="scientific">Escherichia coli (strain ATCC 8739 / DSM 1576 / NBRC 3972 / NCIMB 8545 / WDCM 00012 / Crooks)</name>
    <dbReference type="NCBI Taxonomy" id="481805"/>
    <lineage>
        <taxon>Bacteria</taxon>
        <taxon>Pseudomonadati</taxon>
        <taxon>Pseudomonadota</taxon>
        <taxon>Gammaproteobacteria</taxon>
        <taxon>Enterobacterales</taxon>
        <taxon>Enterobacteriaceae</taxon>
        <taxon>Escherichia</taxon>
    </lineage>
</organism>
<keyword id="KW-0032">Aminotransferase</keyword>
<keyword id="KW-0663">Pyridoxal phosphate</keyword>
<keyword id="KW-0808">Transferase</keyword>
<dbReference type="EC" id="2.6.1.82" evidence="1"/>
<dbReference type="EC" id="2.6.1.29" evidence="1"/>
<dbReference type="EMBL" id="CP000946">
    <property type="protein sequence ID" value="ACA76303.1"/>
    <property type="status" value="ALT_INIT"/>
    <property type="molecule type" value="Genomic_DNA"/>
</dbReference>
<dbReference type="SMR" id="B1IRP4"/>
<dbReference type="KEGG" id="ecl:EcolC_0627"/>
<dbReference type="HOGENOM" id="CLU_016922_10_0_6"/>
<dbReference type="UniPathway" id="UPA00188">
    <property type="reaction ID" value="UER00290"/>
</dbReference>
<dbReference type="GO" id="GO:0019161">
    <property type="term" value="F:diamine transaminase activity"/>
    <property type="evidence" value="ECO:0007669"/>
    <property type="project" value="UniProtKB-EC"/>
</dbReference>
<dbReference type="GO" id="GO:0042802">
    <property type="term" value="F:identical protein binding"/>
    <property type="evidence" value="ECO:0007669"/>
    <property type="project" value="TreeGrafter"/>
</dbReference>
<dbReference type="GO" id="GO:0033094">
    <property type="term" value="F:putrescine--2-oxoglutarate transaminase activity"/>
    <property type="evidence" value="ECO:0007669"/>
    <property type="project" value="UniProtKB-UniRule"/>
</dbReference>
<dbReference type="GO" id="GO:0030170">
    <property type="term" value="F:pyridoxal phosphate binding"/>
    <property type="evidence" value="ECO:0007669"/>
    <property type="project" value="UniProtKB-UniRule"/>
</dbReference>
<dbReference type="GO" id="GO:0019477">
    <property type="term" value="P:L-lysine catabolic process"/>
    <property type="evidence" value="ECO:0007669"/>
    <property type="project" value="UniProtKB-UniRule"/>
</dbReference>
<dbReference type="GO" id="GO:0009447">
    <property type="term" value="P:putrescine catabolic process"/>
    <property type="evidence" value="ECO:0007669"/>
    <property type="project" value="UniProtKB-UniRule"/>
</dbReference>
<dbReference type="CDD" id="cd00610">
    <property type="entry name" value="OAT_like"/>
    <property type="match status" value="1"/>
</dbReference>
<dbReference type="FunFam" id="3.40.640.10:FF:000004">
    <property type="entry name" value="Acetylornithine aminotransferase"/>
    <property type="match status" value="1"/>
</dbReference>
<dbReference type="Gene3D" id="3.90.1150.10">
    <property type="entry name" value="Aspartate Aminotransferase, domain 1"/>
    <property type="match status" value="1"/>
</dbReference>
<dbReference type="Gene3D" id="3.40.640.10">
    <property type="entry name" value="Type I PLP-dependent aspartate aminotransferase-like (Major domain)"/>
    <property type="match status" value="1"/>
</dbReference>
<dbReference type="HAMAP" id="MF_01276">
    <property type="entry name" value="Putres_aminotrans_3"/>
    <property type="match status" value="1"/>
</dbReference>
<dbReference type="InterPro" id="IPR005814">
    <property type="entry name" value="Aminotrans_3"/>
</dbReference>
<dbReference type="InterPro" id="IPR049704">
    <property type="entry name" value="Aminotrans_3_PPA_site"/>
</dbReference>
<dbReference type="InterPro" id="IPR050103">
    <property type="entry name" value="Class-III_PLP-dep_AT"/>
</dbReference>
<dbReference type="InterPro" id="IPR017747">
    <property type="entry name" value="Putrescine_aminotransferase"/>
</dbReference>
<dbReference type="InterPro" id="IPR015424">
    <property type="entry name" value="PyrdxlP-dep_Trfase"/>
</dbReference>
<dbReference type="InterPro" id="IPR015421">
    <property type="entry name" value="PyrdxlP-dep_Trfase_major"/>
</dbReference>
<dbReference type="InterPro" id="IPR015422">
    <property type="entry name" value="PyrdxlP-dep_Trfase_small"/>
</dbReference>
<dbReference type="NCBIfam" id="NF008570">
    <property type="entry name" value="PRK11522.1"/>
    <property type="match status" value="1"/>
</dbReference>
<dbReference type="NCBIfam" id="TIGR03372">
    <property type="entry name" value="putres_am_tran"/>
    <property type="match status" value="1"/>
</dbReference>
<dbReference type="PANTHER" id="PTHR11986">
    <property type="entry name" value="AMINOTRANSFERASE CLASS III"/>
    <property type="match status" value="1"/>
</dbReference>
<dbReference type="PANTHER" id="PTHR11986:SF112">
    <property type="entry name" value="PUTRESCINE AMINOTRANSFERASE"/>
    <property type="match status" value="1"/>
</dbReference>
<dbReference type="Pfam" id="PF00202">
    <property type="entry name" value="Aminotran_3"/>
    <property type="match status" value="1"/>
</dbReference>
<dbReference type="PIRSF" id="PIRSF000521">
    <property type="entry name" value="Transaminase_4ab_Lys_Orn"/>
    <property type="match status" value="1"/>
</dbReference>
<dbReference type="SUPFAM" id="SSF53383">
    <property type="entry name" value="PLP-dependent transferases"/>
    <property type="match status" value="1"/>
</dbReference>
<dbReference type="PROSITE" id="PS00600">
    <property type="entry name" value="AA_TRANSFER_CLASS_3"/>
    <property type="match status" value="1"/>
</dbReference>
<protein>
    <recommendedName>
        <fullName evidence="1">Putrescine aminotransferase</fullName>
        <shortName evidence="1">PAT</shortName>
        <shortName evidence="1">PATase</shortName>
        <ecNumber evidence="1">2.6.1.82</ecNumber>
    </recommendedName>
    <alternativeName>
        <fullName evidence="1">Cadaverine transaminase</fullName>
    </alternativeName>
    <alternativeName>
        <fullName evidence="1">Diamine transaminase</fullName>
        <ecNumber evidence="1">2.6.1.29</ecNumber>
    </alternativeName>
    <alternativeName>
        <fullName evidence="1">Putrescine transaminase</fullName>
    </alternativeName>
    <alternativeName>
        <fullName evidence="1">Putrescine--2-oxoglutaric acid transaminase</fullName>
    </alternativeName>
</protein>
<comment type="function">
    <text evidence="1">Catalyzes the aminotransferase reaction from putrescine to 2-oxoglutarate, leading to glutamate and 4-aminobutanal, which spontaneously cyclizes to form 1-pyrroline. This is the first step in one of two pathways for putrescine degradation, where putrescine is converted into 4-aminobutanoate (gamma-aminobutyrate or GABA) via 4-aminobutanal. Also functions as a cadaverine transaminase in a a L-lysine degradation pathway to succinate that proceeds via cadaverine, glutarate and L-2-hydroxyglutarate.</text>
</comment>
<comment type="catalytic activity">
    <reaction evidence="1">
        <text>an alkane-alpha,omega-diamine + 2-oxoglutarate = an omega-aminoaldehyde + L-glutamate</text>
        <dbReference type="Rhea" id="RHEA:18217"/>
        <dbReference type="Rhea" id="RHEA-COMP:9766"/>
        <dbReference type="Rhea" id="RHEA-COMP:12750"/>
        <dbReference type="ChEBI" id="CHEBI:16810"/>
        <dbReference type="ChEBI" id="CHEBI:29985"/>
        <dbReference type="ChEBI" id="CHEBI:70977"/>
        <dbReference type="ChEBI" id="CHEBI:133427"/>
        <dbReference type="EC" id="2.6.1.29"/>
    </reaction>
    <physiologicalReaction direction="left-to-right" evidence="1">
        <dbReference type="Rhea" id="RHEA:18218"/>
    </physiologicalReaction>
</comment>
<comment type="catalytic activity">
    <reaction evidence="1">
        <text>putrescine + 2-oxoglutarate = 1-pyrroline + L-glutamate + H2O</text>
        <dbReference type="Rhea" id="RHEA:12268"/>
        <dbReference type="ChEBI" id="CHEBI:15377"/>
        <dbReference type="ChEBI" id="CHEBI:16810"/>
        <dbReference type="ChEBI" id="CHEBI:29985"/>
        <dbReference type="ChEBI" id="CHEBI:36781"/>
        <dbReference type="ChEBI" id="CHEBI:326268"/>
        <dbReference type="EC" id="2.6.1.82"/>
    </reaction>
    <physiologicalReaction direction="left-to-right" evidence="1">
        <dbReference type="Rhea" id="RHEA:12269"/>
    </physiologicalReaction>
</comment>
<comment type="catalytic activity">
    <reaction evidence="1">
        <text>cadaverine + 2-oxoglutarate = 5-aminopentanal + L-glutamate</text>
        <dbReference type="Rhea" id="RHEA:61624"/>
        <dbReference type="ChEBI" id="CHEBI:16810"/>
        <dbReference type="ChEBI" id="CHEBI:29985"/>
        <dbReference type="ChEBI" id="CHEBI:58384"/>
        <dbReference type="ChEBI" id="CHEBI:144896"/>
    </reaction>
    <physiologicalReaction direction="left-to-right" evidence="1">
        <dbReference type="Rhea" id="RHEA:61625"/>
    </physiologicalReaction>
</comment>
<comment type="cofactor">
    <cofactor evidence="1">
        <name>pyridoxal 5'-phosphate</name>
        <dbReference type="ChEBI" id="CHEBI:597326"/>
    </cofactor>
</comment>
<comment type="pathway">
    <text evidence="1">Amine and polyamine degradation; putrescine degradation; 4-aminobutanal from putrescine (transaminase route): step 1/1.</text>
</comment>
<comment type="similarity">
    <text evidence="1">Belongs to the class-III pyridoxal-phosphate-dependent aminotransferase family. Putrescine aminotransferase subfamily.</text>
</comment>
<comment type="sequence caution" evidence="2">
    <conflict type="erroneous initiation">
        <sequence resource="EMBL-CDS" id="ACA76303"/>
    </conflict>
</comment>
<proteinExistence type="inferred from homology"/>
<reference key="1">
    <citation type="submission" date="2008-02" db="EMBL/GenBank/DDBJ databases">
        <title>Complete sequence of Escherichia coli C str. ATCC 8739.</title>
        <authorList>
            <person name="Copeland A."/>
            <person name="Lucas S."/>
            <person name="Lapidus A."/>
            <person name="Glavina del Rio T."/>
            <person name="Dalin E."/>
            <person name="Tice H."/>
            <person name="Bruce D."/>
            <person name="Goodwin L."/>
            <person name="Pitluck S."/>
            <person name="Kiss H."/>
            <person name="Brettin T."/>
            <person name="Detter J.C."/>
            <person name="Han C."/>
            <person name="Kuske C.R."/>
            <person name="Schmutz J."/>
            <person name="Larimer F."/>
            <person name="Land M."/>
            <person name="Hauser L."/>
            <person name="Kyrpides N."/>
            <person name="Mikhailova N."/>
            <person name="Ingram L."/>
            <person name="Richardson P."/>
        </authorList>
    </citation>
    <scope>NUCLEOTIDE SEQUENCE [LARGE SCALE GENOMIC DNA]</scope>
    <source>
        <strain>ATCC 8739 / DSM 1576 / NBRC 3972 / NCIMB 8545 / WDCM 00012 / Crooks</strain>
    </source>
</reference>
<feature type="chain" id="PRO_0000379554" description="Putrescine aminotransferase">
    <location>
        <begin position="1"/>
        <end position="459"/>
    </location>
</feature>
<feature type="binding site" description="in other chain" evidence="1">
    <location>
        <begin position="150"/>
        <end position="151"/>
    </location>
    <ligand>
        <name>pyridoxal 5'-phosphate</name>
        <dbReference type="ChEBI" id="CHEBI:597326"/>
        <note>ligand shared between dimeric partners</note>
    </ligand>
</feature>
<feature type="binding site" description="in other chain" evidence="1">
    <location>
        <position position="274"/>
    </location>
    <ligand>
        <name>pyridoxal 5'-phosphate</name>
        <dbReference type="ChEBI" id="CHEBI:597326"/>
        <note>ligand shared between dimeric partners</note>
    </ligand>
</feature>
<feature type="binding site" evidence="1">
    <location>
        <position position="332"/>
    </location>
    <ligand>
        <name>pyridoxal 5'-phosphate</name>
        <dbReference type="ChEBI" id="CHEBI:597326"/>
        <note>ligand shared between dimeric partners</note>
    </ligand>
</feature>
<feature type="modified residue" description="N6-(pyridoxal phosphate)lysine" evidence="1">
    <location>
        <position position="300"/>
    </location>
</feature>
<evidence type="ECO:0000255" key="1">
    <source>
        <dbReference type="HAMAP-Rule" id="MF_01276"/>
    </source>
</evidence>
<evidence type="ECO:0000305" key="2"/>